<feature type="chain" id="PRO_0000430530" description="RINT1-like protein MAG2">
    <location>
        <begin position="1"/>
        <end position="795"/>
    </location>
</feature>
<feature type="domain" description="RINT1/TIP20" evidence="2">
    <location>
        <begin position="207"/>
        <end position="795"/>
    </location>
</feature>
<feature type="region of interest" description="Disordered" evidence="3">
    <location>
        <begin position="91"/>
        <end position="111"/>
    </location>
</feature>
<feature type="coiled-coil region" evidence="1">
    <location>
        <begin position="35"/>
        <end position="64"/>
    </location>
</feature>
<feature type="compositionally biased region" description="Basic and acidic residues" evidence="3">
    <location>
        <begin position="100"/>
        <end position="111"/>
    </location>
</feature>
<feature type="mutagenesis site" description="In mag2-5; accumulation of precursors of storage proteins in dry seeds." evidence="4">
    <original>S</original>
    <variation>N</variation>
    <location>
        <position position="265"/>
    </location>
</feature>
<feature type="mutagenesis site" description="In mag2-6; accumulation of precursors of storage proteins in dry seeds." evidence="4">
    <original>V</original>
    <variation>M</variation>
    <location>
        <position position="330"/>
    </location>
</feature>
<feature type="mutagenesis site" description="In mag2-7; accumulation of precursors of storage proteins in dry seeds." evidence="4">
    <original>L</original>
    <variation>F</variation>
    <location>
        <position position="348"/>
    </location>
</feature>
<feature type="sequence conflict" description="In Ref. 3; AAM13172." ref="3">
    <original>R</original>
    <variation>Q</variation>
    <location>
        <position position="227"/>
    </location>
</feature>
<protein>
    <recommendedName>
        <fullName evidence="8">RINT1-like protein MAG2</fullName>
    </recommendedName>
    <alternativeName>
        <fullName evidence="7">Protein MAIGO 2</fullName>
    </alternativeName>
</protein>
<dbReference type="EMBL" id="AL049746">
    <property type="protein sequence ID" value="CAB41853.1"/>
    <property type="molecule type" value="Genomic_DNA"/>
</dbReference>
<dbReference type="EMBL" id="CP002686">
    <property type="protein sequence ID" value="AEE78320.1"/>
    <property type="molecule type" value="Genomic_DNA"/>
</dbReference>
<dbReference type="EMBL" id="AY093173">
    <property type="protein sequence ID" value="AAM13172.1"/>
    <property type="molecule type" value="mRNA"/>
</dbReference>
<dbReference type="PIR" id="T07709">
    <property type="entry name" value="T07709"/>
</dbReference>
<dbReference type="RefSeq" id="NP_190354.1">
    <property type="nucleotide sequence ID" value="NM_114638.3"/>
</dbReference>
<dbReference type="SMR" id="Q9STU3"/>
<dbReference type="BioGRID" id="9244">
    <property type="interactions" value="3"/>
</dbReference>
<dbReference type="FunCoup" id="Q9STU3">
    <property type="interactions" value="4403"/>
</dbReference>
<dbReference type="STRING" id="3702.Q9STU3"/>
<dbReference type="iPTMnet" id="Q9STU3"/>
<dbReference type="PaxDb" id="3702-AT3G47700.1"/>
<dbReference type="ProteomicsDB" id="238231"/>
<dbReference type="EnsemblPlants" id="AT3G47700.1">
    <property type="protein sequence ID" value="AT3G47700.1"/>
    <property type="gene ID" value="AT3G47700"/>
</dbReference>
<dbReference type="GeneID" id="823924"/>
<dbReference type="Gramene" id="AT3G47700.1">
    <property type="protein sequence ID" value="AT3G47700.1"/>
    <property type="gene ID" value="AT3G47700"/>
</dbReference>
<dbReference type="KEGG" id="ath:AT3G47700"/>
<dbReference type="Araport" id="AT3G47700"/>
<dbReference type="TAIR" id="AT3G47700">
    <property type="gene designation" value="MAG2"/>
</dbReference>
<dbReference type="eggNOG" id="KOG2218">
    <property type="taxonomic scope" value="Eukaryota"/>
</dbReference>
<dbReference type="HOGENOM" id="CLU_384326_0_0_1"/>
<dbReference type="InParanoid" id="Q9STU3"/>
<dbReference type="OMA" id="FRTGWVE"/>
<dbReference type="PhylomeDB" id="Q9STU3"/>
<dbReference type="PRO" id="PR:Q9STU3"/>
<dbReference type="Proteomes" id="UP000006548">
    <property type="component" value="Chromosome 3"/>
</dbReference>
<dbReference type="ExpressionAtlas" id="Q9STU3">
    <property type="expression patterns" value="baseline and differential"/>
</dbReference>
<dbReference type="GO" id="GO:0005829">
    <property type="term" value="C:cytosol"/>
    <property type="evidence" value="ECO:0000314"/>
    <property type="project" value="TAIR"/>
</dbReference>
<dbReference type="GO" id="GO:0070939">
    <property type="term" value="C:Dsl1/NZR complex"/>
    <property type="evidence" value="ECO:0007669"/>
    <property type="project" value="InterPro"/>
</dbReference>
<dbReference type="GO" id="GO:0042406">
    <property type="term" value="C:extrinsic component of endoplasmic reticulum membrane"/>
    <property type="evidence" value="ECO:0000314"/>
    <property type="project" value="TAIR"/>
</dbReference>
<dbReference type="GO" id="GO:0006888">
    <property type="term" value="P:endoplasmic reticulum to Golgi vesicle-mediated transport"/>
    <property type="evidence" value="ECO:0000315"/>
    <property type="project" value="TAIR"/>
</dbReference>
<dbReference type="GO" id="GO:0006623">
    <property type="term" value="P:protein targeting to vacuole"/>
    <property type="evidence" value="ECO:0000315"/>
    <property type="project" value="TAIR"/>
</dbReference>
<dbReference type="GO" id="GO:0006890">
    <property type="term" value="P:retrograde vesicle-mediated transport, Golgi to endoplasmic reticulum"/>
    <property type="evidence" value="ECO:0007669"/>
    <property type="project" value="InterPro"/>
</dbReference>
<dbReference type="FunFam" id="1.20.58.670:FF:000006">
    <property type="entry name" value="RINT1-like protein MAG2"/>
    <property type="match status" value="1"/>
</dbReference>
<dbReference type="Gene3D" id="1.20.58.670">
    <property type="entry name" value="Dsl1p vesicle tethering complex, Tip20p subunit, domain D"/>
    <property type="match status" value="1"/>
</dbReference>
<dbReference type="InterPro" id="IPR042044">
    <property type="entry name" value="EXOC6PINT-1/Sec15/Tip20_C_dom2"/>
</dbReference>
<dbReference type="InterPro" id="IPR007528">
    <property type="entry name" value="RINT1_Tip20"/>
</dbReference>
<dbReference type="PANTHER" id="PTHR13520">
    <property type="entry name" value="RAD50-INTERACTING PROTEIN 1 RINT-1"/>
    <property type="match status" value="1"/>
</dbReference>
<dbReference type="PANTHER" id="PTHR13520:SF1">
    <property type="entry name" value="RINT1-LIKE PROTEIN MAG2"/>
    <property type="match status" value="1"/>
</dbReference>
<dbReference type="Pfam" id="PF04437">
    <property type="entry name" value="RINT1_TIP1"/>
    <property type="match status" value="1"/>
</dbReference>
<dbReference type="PROSITE" id="PS51386">
    <property type="entry name" value="RINT1_TIP20"/>
    <property type="match status" value="1"/>
</dbReference>
<comment type="function">
    <text evidence="4 5 6">Functions in the anterograde transport of storage protein precursors from the endoplasmic reticulum (ER) to the Golgi complex and in the retrograde transport from the Golgi complex to the ER (PubMed:17194767, PubMed:23025793). Forms a complex with ZW10/MIP1, MIP2 and MIP3 on the ER that may be responsible for efficient transport of seed storage proteins (PubMed:24118572). Required for the responses to environmental stresses during seed germination and vegetative growth. Probably not involved in the retrograde transport from the ER to the apoplast (PubMed:23025793).</text>
</comment>
<comment type="subunit">
    <text evidence="4 5 6">Interacts with SEC20 and SYP81 (PubMed:17194767). Interacts with ZW10 (via the central region) (PubMed:23025793). Forms a complex with ZW10/MIP1, MIP2 and MIP3 on the endoplasmic reticulum (PubMed:24118572).</text>
</comment>
<comment type="subcellular location">
    <subcellularLocation>
        <location>Endoplasmic reticulum membrane</location>
        <topology evidence="4 5">Peripheral membrane protein</topology>
    </subcellularLocation>
</comment>
<comment type="tissue specificity">
    <text evidence="5">Highly expressed in dry seeds. Expressed at low levels in roots, rosette and cauline leaves, stems and flowers.</text>
</comment>
<comment type="induction">
    <text evidence="5">By salt and osmotic stresses.</text>
</comment>
<comment type="disruption phenotype">
    <text evidence="4 5">No visible phenotype under normal growth conditions, but dry seeds of mutant plants accumulate the precursors of the two major storage proteins albumin 2S and globulin 12S (PubMed:17194767). Increased sensitivity to salt stress, osmotic stress and abscisic acid (ABA) during germination and vegetative growth (PubMed:23025793).</text>
</comment>
<comment type="similarity">
    <text evidence="8">Belongs to the RINT1 family.</text>
</comment>
<sequence length="795" mass="90233">MEAIKPLPQVSSFSASVFSFLDGRFKESTDLSHSTGLVSELQTEISELDQRLAGLNRQLESGLAAYASFSDRVGGLFFEVNAKLADLSSSTSVTRSASDSGKEEEATEHVAGEDLPSLAKEVAQVESVRAYAETALKLDTLVGDIEDAVMSSLNKNLRTSRSSGFEEVRLHAIKTLKTTEEILSSVAKRHPRWARLVSAVDHRVDRALAMMRPQAIADYRALLSSLRWPPQLSTLTSASLDSKSENVQNPLFNMEGSLKSQYCGSFHALCSLQGLQLQRKSRQLGIHKGENVLFHQPLWAIEELVNPLTVASQRHFTKWSEKPEFIFALVYKITRDYVDSMDELLQPLVDEAKLAGYSCREEWVSAMVSSLSLYLVKEIFPIYVGQLDEANETDLRSEAKVSWLHLIDLMISFDKRVQSLVSQSGILSLQEDGNLLRISSLSVFCDRPDWLDLWAEIELDERLVKFKEEIDNDRNWTAKVQDELISSSNVYRPPIISSIFLQHLSSIIERSKSVPALYLRARFLRLAASPTIHKFLDCLLLRCQDADGLTALTENNDLIKVSNSINAGHYIESVLEEWSEDVFFLEMGTGQHDPQEVPGLENFTEPSEGIFGEEFEKLEKFRLEWINKLSVVILRGFDARIREYIKNRKQWQEKKDKEWTVSRALVGALDYLQGKTSIIEENLNKADFTAMWRTLASEIDKLFFNSILMANVKFTNDGVERLKVDMEVLYGVFRTWCVRPEGFFPKLSEGLTLLKMEEKQVKDGLSRGDKWLRENRIRYLSEAEAKKVAKSRVFS</sequence>
<keyword id="KW-0175">Coiled coil</keyword>
<keyword id="KW-0256">Endoplasmic reticulum</keyword>
<keyword id="KW-0931">ER-Golgi transport</keyword>
<keyword id="KW-0472">Membrane</keyword>
<keyword id="KW-0653">Protein transport</keyword>
<keyword id="KW-1185">Reference proteome</keyword>
<keyword id="KW-0813">Transport</keyword>
<organism>
    <name type="scientific">Arabidopsis thaliana</name>
    <name type="common">Mouse-ear cress</name>
    <dbReference type="NCBI Taxonomy" id="3702"/>
    <lineage>
        <taxon>Eukaryota</taxon>
        <taxon>Viridiplantae</taxon>
        <taxon>Streptophyta</taxon>
        <taxon>Embryophyta</taxon>
        <taxon>Tracheophyta</taxon>
        <taxon>Spermatophyta</taxon>
        <taxon>Magnoliopsida</taxon>
        <taxon>eudicotyledons</taxon>
        <taxon>Gunneridae</taxon>
        <taxon>Pentapetalae</taxon>
        <taxon>rosids</taxon>
        <taxon>malvids</taxon>
        <taxon>Brassicales</taxon>
        <taxon>Brassicaceae</taxon>
        <taxon>Camelineae</taxon>
        <taxon>Arabidopsis</taxon>
    </lineage>
</organism>
<evidence type="ECO:0000255" key="1"/>
<evidence type="ECO:0000255" key="2">
    <source>
        <dbReference type="PROSITE-ProRule" id="PRU00717"/>
    </source>
</evidence>
<evidence type="ECO:0000256" key="3">
    <source>
        <dbReference type="SAM" id="MobiDB-lite"/>
    </source>
</evidence>
<evidence type="ECO:0000269" key="4">
    <source>
    </source>
</evidence>
<evidence type="ECO:0000269" key="5">
    <source>
    </source>
</evidence>
<evidence type="ECO:0000269" key="6">
    <source>
    </source>
</evidence>
<evidence type="ECO:0000303" key="7">
    <source>
    </source>
</evidence>
<evidence type="ECO:0000305" key="8"/>
<evidence type="ECO:0000312" key="9">
    <source>
        <dbReference type="Araport" id="AT3G47700"/>
    </source>
</evidence>
<evidence type="ECO:0000312" key="10">
    <source>
        <dbReference type="EMBL" id="CAB41853.1"/>
    </source>
</evidence>
<gene>
    <name evidence="7" type="primary">MAG2</name>
    <name evidence="9" type="ordered locus">At3g47700</name>
    <name evidence="10" type="ORF">T23J7.30</name>
</gene>
<reference key="1">
    <citation type="journal article" date="2000" name="Nature">
        <title>Sequence and analysis of chromosome 3 of the plant Arabidopsis thaliana.</title>
        <authorList>
            <person name="Salanoubat M."/>
            <person name="Lemcke K."/>
            <person name="Rieger M."/>
            <person name="Ansorge W."/>
            <person name="Unseld M."/>
            <person name="Fartmann B."/>
            <person name="Valle G."/>
            <person name="Bloecker H."/>
            <person name="Perez-Alonso M."/>
            <person name="Obermaier B."/>
            <person name="Delseny M."/>
            <person name="Boutry M."/>
            <person name="Grivell L.A."/>
            <person name="Mache R."/>
            <person name="Puigdomenech P."/>
            <person name="De Simone V."/>
            <person name="Choisne N."/>
            <person name="Artiguenave F."/>
            <person name="Robert C."/>
            <person name="Brottier P."/>
            <person name="Wincker P."/>
            <person name="Cattolico L."/>
            <person name="Weissenbach J."/>
            <person name="Saurin W."/>
            <person name="Quetier F."/>
            <person name="Schaefer M."/>
            <person name="Mueller-Auer S."/>
            <person name="Gabel C."/>
            <person name="Fuchs M."/>
            <person name="Benes V."/>
            <person name="Wurmbach E."/>
            <person name="Drzonek H."/>
            <person name="Erfle H."/>
            <person name="Jordan N."/>
            <person name="Bangert S."/>
            <person name="Wiedelmann R."/>
            <person name="Kranz H."/>
            <person name="Voss H."/>
            <person name="Holland R."/>
            <person name="Brandt P."/>
            <person name="Nyakatura G."/>
            <person name="Vezzi A."/>
            <person name="D'Angelo M."/>
            <person name="Pallavicini A."/>
            <person name="Toppo S."/>
            <person name="Simionati B."/>
            <person name="Conrad A."/>
            <person name="Hornischer K."/>
            <person name="Kauer G."/>
            <person name="Loehnert T.-H."/>
            <person name="Nordsiek G."/>
            <person name="Reichelt J."/>
            <person name="Scharfe M."/>
            <person name="Schoen O."/>
            <person name="Bargues M."/>
            <person name="Terol J."/>
            <person name="Climent J."/>
            <person name="Navarro P."/>
            <person name="Collado C."/>
            <person name="Perez-Perez A."/>
            <person name="Ottenwaelder B."/>
            <person name="Duchemin D."/>
            <person name="Cooke R."/>
            <person name="Laudie M."/>
            <person name="Berger-Llauro C."/>
            <person name="Purnelle B."/>
            <person name="Masuy D."/>
            <person name="de Haan M."/>
            <person name="Maarse A.C."/>
            <person name="Alcaraz J.-P."/>
            <person name="Cottet A."/>
            <person name="Casacuberta E."/>
            <person name="Monfort A."/>
            <person name="Argiriou A."/>
            <person name="Flores M."/>
            <person name="Liguori R."/>
            <person name="Vitale D."/>
            <person name="Mannhaupt G."/>
            <person name="Haase D."/>
            <person name="Schoof H."/>
            <person name="Rudd S."/>
            <person name="Zaccaria P."/>
            <person name="Mewes H.-W."/>
            <person name="Mayer K.F.X."/>
            <person name="Kaul S."/>
            <person name="Town C.D."/>
            <person name="Koo H.L."/>
            <person name="Tallon L.J."/>
            <person name="Jenkins J."/>
            <person name="Rooney T."/>
            <person name="Rizzo M."/>
            <person name="Walts A."/>
            <person name="Utterback T."/>
            <person name="Fujii C.Y."/>
            <person name="Shea T.P."/>
            <person name="Creasy T.H."/>
            <person name="Haas B."/>
            <person name="Maiti R."/>
            <person name="Wu D."/>
            <person name="Peterson J."/>
            <person name="Van Aken S."/>
            <person name="Pai G."/>
            <person name="Militscher J."/>
            <person name="Sellers P."/>
            <person name="Gill J.E."/>
            <person name="Feldblyum T.V."/>
            <person name="Preuss D."/>
            <person name="Lin X."/>
            <person name="Nierman W.C."/>
            <person name="Salzberg S.L."/>
            <person name="White O."/>
            <person name="Venter J.C."/>
            <person name="Fraser C.M."/>
            <person name="Kaneko T."/>
            <person name="Nakamura Y."/>
            <person name="Sato S."/>
            <person name="Kato T."/>
            <person name="Asamizu E."/>
            <person name="Sasamoto S."/>
            <person name="Kimura T."/>
            <person name="Idesawa K."/>
            <person name="Kawashima K."/>
            <person name="Kishida Y."/>
            <person name="Kiyokawa C."/>
            <person name="Kohara M."/>
            <person name="Matsumoto M."/>
            <person name="Matsuno A."/>
            <person name="Muraki A."/>
            <person name="Nakayama S."/>
            <person name="Nakazaki N."/>
            <person name="Shinpo S."/>
            <person name="Takeuchi C."/>
            <person name="Wada T."/>
            <person name="Watanabe A."/>
            <person name="Yamada M."/>
            <person name="Yasuda M."/>
            <person name="Tabata S."/>
        </authorList>
    </citation>
    <scope>NUCLEOTIDE SEQUENCE [LARGE SCALE GENOMIC DNA]</scope>
    <source>
        <strain>cv. Columbia</strain>
    </source>
</reference>
<reference key="2">
    <citation type="journal article" date="2017" name="Plant J.">
        <title>Araport11: a complete reannotation of the Arabidopsis thaliana reference genome.</title>
        <authorList>
            <person name="Cheng C.Y."/>
            <person name="Krishnakumar V."/>
            <person name="Chan A.P."/>
            <person name="Thibaud-Nissen F."/>
            <person name="Schobel S."/>
            <person name="Town C.D."/>
        </authorList>
    </citation>
    <scope>GENOME REANNOTATION</scope>
    <source>
        <strain>cv. Columbia</strain>
    </source>
</reference>
<reference key="3">
    <citation type="journal article" date="2003" name="Science">
        <title>Empirical analysis of transcriptional activity in the Arabidopsis genome.</title>
        <authorList>
            <person name="Yamada K."/>
            <person name="Lim J."/>
            <person name="Dale J.M."/>
            <person name="Chen H."/>
            <person name="Shinn P."/>
            <person name="Palm C.J."/>
            <person name="Southwick A.M."/>
            <person name="Wu H.C."/>
            <person name="Kim C.J."/>
            <person name="Nguyen M."/>
            <person name="Pham P.K."/>
            <person name="Cheuk R.F."/>
            <person name="Karlin-Newmann G."/>
            <person name="Liu S.X."/>
            <person name="Lam B."/>
            <person name="Sakano H."/>
            <person name="Wu T."/>
            <person name="Yu G."/>
            <person name="Miranda M."/>
            <person name="Quach H.L."/>
            <person name="Tripp M."/>
            <person name="Chang C.H."/>
            <person name="Lee J.M."/>
            <person name="Toriumi M.J."/>
            <person name="Chan M.M."/>
            <person name="Tang C.C."/>
            <person name="Onodera C.S."/>
            <person name="Deng J.M."/>
            <person name="Akiyama K."/>
            <person name="Ansari Y."/>
            <person name="Arakawa T."/>
            <person name="Banh J."/>
            <person name="Banno F."/>
            <person name="Bowser L."/>
            <person name="Brooks S.Y."/>
            <person name="Carninci P."/>
            <person name="Chao Q."/>
            <person name="Choy N."/>
            <person name="Enju A."/>
            <person name="Goldsmith A.D."/>
            <person name="Gurjal M."/>
            <person name="Hansen N.F."/>
            <person name="Hayashizaki Y."/>
            <person name="Johnson-Hopson C."/>
            <person name="Hsuan V.W."/>
            <person name="Iida K."/>
            <person name="Karnes M."/>
            <person name="Khan S."/>
            <person name="Koesema E."/>
            <person name="Ishida J."/>
            <person name="Jiang P.X."/>
            <person name="Jones T."/>
            <person name="Kawai J."/>
            <person name="Kamiya A."/>
            <person name="Meyers C."/>
            <person name="Nakajima M."/>
            <person name="Narusaka M."/>
            <person name="Seki M."/>
            <person name="Sakurai T."/>
            <person name="Satou M."/>
            <person name="Tamse R."/>
            <person name="Vaysberg M."/>
            <person name="Wallender E.K."/>
            <person name="Wong C."/>
            <person name="Yamamura Y."/>
            <person name="Yuan S."/>
            <person name="Shinozaki K."/>
            <person name="Davis R.W."/>
            <person name="Theologis A."/>
            <person name="Ecker J.R."/>
        </authorList>
    </citation>
    <scope>NUCLEOTIDE SEQUENCE [LARGE SCALE MRNA]</scope>
    <source>
        <strain>cv. Columbia</strain>
    </source>
</reference>
<reference key="4">
    <citation type="journal article" date="2006" name="Plant Cell">
        <title>MAIGO2 is involved in exit of seed storage proteins from the endoplasmic reticulum in Arabidopsis thaliana.</title>
        <authorList>
            <person name="Li L."/>
            <person name="Shimada T."/>
            <person name="Takahashi H."/>
            <person name="Ueda H."/>
            <person name="Fukao Y."/>
            <person name="Kondo M."/>
            <person name="Nishimura M."/>
            <person name="Hara-Nishimura I."/>
        </authorList>
    </citation>
    <scope>FUNCTION</scope>
    <scope>INTERACTION WITH SEC20 AND SYP81</scope>
    <scope>SUBCELLULAR LOCATION</scope>
    <scope>DISRUPTION PHENOTYPE</scope>
    <scope>MUTAGENESIS OF SER-265; VAL-330 AND LEU-348</scope>
</reference>
<reference key="5">
    <citation type="journal article" date="2013" name="Physiol. Plantarum">
        <title>MAIGO2 is involved in abscisic acid-mediated response to abiotic stresses and Golgi-to-ER retrograde transport.</title>
        <authorList>
            <person name="Zhao P."/>
            <person name="Liu F."/>
            <person name="Zhang B."/>
            <person name="Liu X."/>
            <person name="Wang B."/>
            <person name="Gong J."/>
            <person name="Yu G."/>
            <person name="Ma M."/>
            <person name="Lu Y."/>
            <person name="Sun J."/>
            <person name="Wang Z."/>
            <person name="Jia P."/>
            <person name="Liu H."/>
        </authorList>
    </citation>
    <scope>FUNCTION</scope>
    <scope>INTERACTION WITH ZW10</scope>
    <scope>SUBCELLULAR LOCATION</scope>
    <scope>TISSUE SPECIFICITY</scope>
    <scope>INDUCTION</scope>
    <scope>DISRUPTION PHENOTYPE</scope>
</reference>
<reference key="6">
    <citation type="journal article" date="2013" name="Plant J.">
        <title>MAG2 and three MAG2-INTERACTING PROTEINs form an ER-localized complex to facilitate storage protein transport in Arabidopsis thaliana.</title>
        <authorList>
            <person name="Li L."/>
            <person name="Shimada T."/>
            <person name="Takahashi H."/>
            <person name="Koumoto Y."/>
            <person name="Shirakawa M."/>
            <person name="Takagi J."/>
            <person name="Zhao X."/>
            <person name="Tu B."/>
            <person name="Jin H."/>
            <person name="Shen Z."/>
            <person name="Han B."/>
            <person name="Jia M."/>
            <person name="Kondo M."/>
            <person name="Nishimura M."/>
            <person name="Hara-Nishimura I."/>
        </authorList>
    </citation>
    <scope>IDENTIFICATION BY MASS SPECTROMETRY</scope>
    <scope>FUNCTION</scope>
    <scope>INTERACTION WITH ZW10/MIP1; MIP2 AND MIP3</scope>
    <scope>DISRUPTION PHENOTYPE</scope>
</reference>
<proteinExistence type="evidence at protein level"/>
<name>MAG2_ARATH</name>
<accession>Q9STU3</accession>
<accession>Q8RWD1</accession>